<accession>Q9P795</accession>
<organism>
    <name type="scientific">Schizosaccharomyces pombe (strain 972 / ATCC 24843)</name>
    <name type="common">Fission yeast</name>
    <dbReference type="NCBI Taxonomy" id="284812"/>
    <lineage>
        <taxon>Eukaryota</taxon>
        <taxon>Fungi</taxon>
        <taxon>Dikarya</taxon>
        <taxon>Ascomycota</taxon>
        <taxon>Taphrinomycotina</taxon>
        <taxon>Schizosaccharomycetes</taxon>
        <taxon>Schizosaccharomycetales</taxon>
        <taxon>Schizosaccharomycetaceae</taxon>
        <taxon>Schizosaccharomyces</taxon>
    </lineage>
</organism>
<proteinExistence type="evidence at protein level"/>
<sequence>MDMTVSNQKAESDDGSDIDDAALLQKINSLPIDQSITNSVSLEKHDFQGSDDHDSSTDLSDSTLEDVEGSEWADVSRGRYFGSDPSESIVCHNCKGNGHISKDCPHVLCTTCGAIDDHISVRCPWTKKCMNCGLLGHIAARCSEPRKRGPRVCRTCHTDTHTSSTCPLIWRYYVEKEHPVRIDVSEVRKFCYNCASDEHFGDDCTLPSRSNYPESTAFCEANCPSGNDASNKEFFETRRKEFQLERREQNRNQKSSKQRPFHKPGNSLASRLGSKPKSFKRKHSPPSEENGNLSFHSSDGRKFTKTSKKNRKRKW</sequence>
<gene>
    <name type="primary">air1</name>
    <name type="ORF">SPBP35G2.08c</name>
</gene>
<feature type="chain" id="PRO_0000356248" description="Protein air1">
    <location>
        <begin position="1"/>
        <end position="315"/>
    </location>
</feature>
<feature type="zinc finger region" description="CCHC-type 1" evidence="2">
    <location>
        <begin position="89"/>
        <end position="106"/>
    </location>
</feature>
<feature type="zinc finger region" description="CCHC-type 2" evidence="2">
    <location>
        <begin position="127"/>
        <end position="144"/>
    </location>
</feature>
<feature type="zinc finger region" description="CCHC-type 3" evidence="2">
    <location>
        <begin position="189"/>
        <end position="206"/>
    </location>
</feature>
<feature type="region of interest" description="Disordered" evidence="3">
    <location>
        <begin position="43"/>
        <end position="68"/>
    </location>
</feature>
<feature type="region of interest" description="Disordered" evidence="3">
    <location>
        <begin position="244"/>
        <end position="315"/>
    </location>
</feature>
<feature type="compositionally biased region" description="Basic and acidic residues" evidence="3">
    <location>
        <begin position="43"/>
        <end position="56"/>
    </location>
</feature>
<feature type="compositionally biased region" description="Polar residues" evidence="3">
    <location>
        <begin position="287"/>
        <end position="297"/>
    </location>
</feature>
<feature type="compositionally biased region" description="Basic residues" evidence="3">
    <location>
        <begin position="303"/>
        <end position="315"/>
    </location>
</feature>
<feature type="modified residue" description="Phosphoserine" evidence="5">
    <location>
        <position position="12"/>
    </location>
</feature>
<feature type="modified residue" description="Phosphoserine" evidence="5">
    <location>
        <position position="16"/>
    </location>
</feature>
<name>AIR1_SCHPO</name>
<protein>
    <recommendedName>
        <fullName>Protein air1</fullName>
    </recommendedName>
</protein>
<comment type="function">
    <text evidence="4">Component of the TRAMP (TRF4) and TRAMP5 complexes which have a poly(A) RNA polymerase activity and are involved in a post-transcriptional quality control mechanism limiting inappropriate expression of genetic information. Polyadenylation is required for the degradative activity of the exosome on several of its nuclear RNA substrates like cryptic transcripts generated by RNA polymerase II and III, or hypomethylated pre-tRNAi-Met. Both complexes polyadenylate RNA processing and degradation intermediates of snRNAs, snoRNAs and mRNAs that accumulate in strains lacking a functional exosome.</text>
</comment>
<comment type="subunit">
    <text evidence="4 6">Component of the TRAMP complex composed of at least cid14, mtr4, and air1.</text>
</comment>
<comment type="subcellular location">
    <subcellularLocation>
        <location evidence="1">Nucleus</location>
        <location evidence="1">Nucleolus</location>
    </subcellularLocation>
</comment>
<comment type="similarity">
    <text evidence="7">Belongs to the AIR1 family.</text>
</comment>
<dbReference type="EMBL" id="CU329671">
    <property type="protein sequence ID" value="CAB87370.2"/>
    <property type="molecule type" value="Genomic_DNA"/>
</dbReference>
<dbReference type="RefSeq" id="NP_595383.2">
    <property type="nucleotide sequence ID" value="NM_001021290.2"/>
</dbReference>
<dbReference type="BioGRID" id="277860">
    <property type="interactions" value="197"/>
</dbReference>
<dbReference type="ELM" id="Q9P795"/>
<dbReference type="FunCoup" id="Q9P795">
    <property type="interactions" value="156"/>
</dbReference>
<dbReference type="STRING" id="284812.Q9P795"/>
<dbReference type="iPTMnet" id="Q9P795"/>
<dbReference type="PaxDb" id="4896-SPBP35G2.08c.1"/>
<dbReference type="EnsemblFungi" id="SPBP35G2.08c.1">
    <property type="protein sequence ID" value="SPBP35G2.08c.1:pep"/>
    <property type="gene ID" value="SPBP35G2.08c"/>
</dbReference>
<dbReference type="GeneID" id="2541349"/>
<dbReference type="KEGG" id="spo:2541349"/>
<dbReference type="PomBase" id="SPBP35G2.08c">
    <property type="gene designation" value="air1"/>
</dbReference>
<dbReference type="VEuPathDB" id="FungiDB:SPBP35G2.08c"/>
<dbReference type="eggNOG" id="KOG4400">
    <property type="taxonomic scope" value="Eukaryota"/>
</dbReference>
<dbReference type="HOGENOM" id="CLU_888910_0_0_1"/>
<dbReference type="InParanoid" id="Q9P795"/>
<dbReference type="OMA" id="SETILCH"/>
<dbReference type="PRO" id="PR:Q9P795"/>
<dbReference type="Proteomes" id="UP000002485">
    <property type="component" value="Chromosome II"/>
</dbReference>
<dbReference type="GO" id="GO:0005730">
    <property type="term" value="C:nucleolus"/>
    <property type="evidence" value="ECO:0000266"/>
    <property type="project" value="PomBase"/>
</dbReference>
<dbReference type="GO" id="GO:0031499">
    <property type="term" value="C:TRAMP complex"/>
    <property type="evidence" value="ECO:0000314"/>
    <property type="project" value="PomBase"/>
</dbReference>
<dbReference type="GO" id="GO:0003723">
    <property type="term" value="F:RNA binding"/>
    <property type="evidence" value="ECO:0000318"/>
    <property type="project" value="GO_Central"/>
</dbReference>
<dbReference type="GO" id="GO:0008270">
    <property type="term" value="F:zinc ion binding"/>
    <property type="evidence" value="ECO:0007669"/>
    <property type="project" value="UniProtKB-KW"/>
</dbReference>
<dbReference type="GO" id="GO:0071031">
    <property type="term" value="P:nuclear mRNA surveillance of mRNA 3'-end processing"/>
    <property type="evidence" value="ECO:0000318"/>
    <property type="project" value="GO_Central"/>
</dbReference>
<dbReference type="GO" id="GO:0071039">
    <property type="term" value="P:nuclear polyadenylation-dependent CUT catabolic process"/>
    <property type="evidence" value="ECO:0000318"/>
    <property type="project" value="GO_Central"/>
</dbReference>
<dbReference type="GO" id="GO:0071035">
    <property type="term" value="P:nuclear polyadenylation-dependent rRNA catabolic process"/>
    <property type="evidence" value="ECO:0000318"/>
    <property type="project" value="GO_Central"/>
</dbReference>
<dbReference type="GO" id="GO:0071036">
    <property type="term" value="P:nuclear polyadenylation-dependent snoRNA catabolic process"/>
    <property type="evidence" value="ECO:0000318"/>
    <property type="project" value="GO_Central"/>
</dbReference>
<dbReference type="GO" id="GO:0071037">
    <property type="term" value="P:nuclear polyadenylation-dependent snRNA catabolic process"/>
    <property type="evidence" value="ECO:0000318"/>
    <property type="project" value="GO_Central"/>
</dbReference>
<dbReference type="GO" id="GO:0043634">
    <property type="term" value="P:polyadenylation-dependent ncRNA catabolic process"/>
    <property type="evidence" value="ECO:0000266"/>
    <property type="project" value="PomBase"/>
</dbReference>
<dbReference type="GO" id="GO:0016075">
    <property type="term" value="P:rRNA catabolic process"/>
    <property type="evidence" value="ECO:0000266"/>
    <property type="project" value="PomBase"/>
</dbReference>
<dbReference type="GO" id="GO:0071038">
    <property type="term" value="P:TRAMP-dependent tRNA surveillance pathway"/>
    <property type="evidence" value="ECO:0000318"/>
    <property type="project" value="GO_Central"/>
</dbReference>
<dbReference type="Gene3D" id="4.10.60.10">
    <property type="entry name" value="Zinc finger, CCHC-type"/>
    <property type="match status" value="2"/>
</dbReference>
<dbReference type="InterPro" id="IPR016713">
    <property type="entry name" value="Air1/2_Saccharomycetales"/>
</dbReference>
<dbReference type="InterPro" id="IPR051644">
    <property type="entry name" value="TRAMP_AT-DNA-binding"/>
</dbReference>
<dbReference type="InterPro" id="IPR001878">
    <property type="entry name" value="Znf_CCHC"/>
</dbReference>
<dbReference type="InterPro" id="IPR036875">
    <property type="entry name" value="Znf_CCHC_sf"/>
</dbReference>
<dbReference type="PANTHER" id="PTHR46543">
    <property type="entry name" value="ZINC FINGER CCHC DOMAIN-CONTAINING PROTEIN 7"/>
    <property type="match status" value="1"/>
</dbReference>
<dbReference type="PANTHER" id="PTHR46543:SF1">
    <property type="entry name" value="ZINC FINGER CCHC DOMAIN-CONTAINING PROTEIN 7"/>
    <property type="match status" value="1"/>
</dbReference>
<dbReference type="Pfam" id="PF00098">
    <property type="entry name" value="zf-CCHC"/>
    <property type="match status" value="2"/>
</dbReference>
<dbReference type="PIRSF" id="PIRSF018162">
    <property type="entry name" value="PolyA_pol_Air1/2"/>
    <property type="match status" value="1"/>
</dbReference>
<dbReference type="SMART" id="SM00343">
    <property type="entry name" value="ZnF_C2HC"/>
    <property type="match status" value="5"/>
</dbReference>
<dbReference type="SUPFAM" id="SSF57756">
    <property type="entry name" value="Retrovirus zinc finger-like domains"/>
    <property type="match status" value="2"/>
</dbReference>
<dbReference type="PROSITE" id="PS50158">
    <property type="entry name" value="ZF_CCHC"/>
    <property type="match status" value="2"/>
</dbReference>
<reference key="1">
    <citation type="journal article" date="2002" name="Nature">
        <title>The genome sequence of Schizosaccharomyces pombe.</title>
        <authorList>
            <person name="Wood V."/>
            <person name="Gwilliam R."/>
            <person name="Rajandream M.A."/>
            <person name="Lyne M.H."/>
            <person name="Lyne R."/>
            <person name="Stewart A."/>
            <person name="Sgouros J.G."/>
            <person name="Peat N."/>
            <person name="Hayles J."/>
            <person name="Baker S.G."/>
            <person name="Basham D."/>
            <person name="Bowman S."/>
            <person name="Brooks K."/>
            <person name="Brown D."/>
            <person name="Brown S."/>
            <person name="Chillingworth T."/>
            <person name="Churcher C.M."/>
            <person name="Collins M."/>
            <person name="Connor R."/>
            <person name="Cronin A."/>
            <person name="Davis P."/>
            <person name="Feltwell T."/>
            <person name="Fraser A."/>
            <person name="Gentles S."/>
            <person name="Goble A."/>
            <person name="Hamlin N."/>
            <person name="Harris D.E."/>
            <person name="Hidalgo J."/>
            <person name="Hodgson G."/>
            <person name="Holroyd S."/>
            <person name="Hornsby T."/>
            <person name="Howarth S."/>
            <person name="Huckle E.J."/>
            <person name="Hunt S."/>
            <person name="Jagels K."/>
            <person name="James K.D."/>
            <person name="Jones L."/>
            <person name="Jones M."/>
            <person name="Leather S."/>
            <person name="McDonald S."/>
            <person name="McLean J."/>
            <person name="Mooney P."/>
            <person name="Moule S."/>
            <person name="Mungall K.L."/>
            <person name="Murphy L.D."/>
            <person name="Niblett D."/>
            <person name="Odell C."/>
            <person name="Oliver K."/>
            <person name="O'Neil S."/>
            <person name="Pearson D."/>
            <person name="Quail M.A."/>
            <person name="Rabbinowitsch E."/>
            <person name="Rutherford K.M."/>
            <person name="Rutter S."/>
            <person name="Saunders D."/>
            <person name="Seeger K."/>
            <person name="Sharp S."/>
            <person name="Skelton J."/>
            <person name="Simmonds M.N."/>
            <person name="Squares R."/>
            <person name="Squares S."/>
            <person name="Stevens K."/>
            <person name="Taylor K."/>
            <person name="Taylor R.G."/>
            <person name="Tivey A."/>
            <person name="Walsh S.V."/>
            <person name="Warren T."/>
            <person name="Whitehead S."/>
            <person name="Woodward J.R."/>
            <person name="Volckaert G."/>
            <person name="Aert R."/>
            <person name="Robben J."/>
            <person name="Grymonprez B."/>
            <person name="Weltjens I."/>
            <person name="Vanstreels E."/>
            <person name="Rieger M."/>
            <person name="Schaefer M."/>
            <person name="Mueller-Auer S."/>
            <person name="Gabel C."/>
            <person name="Fuchs M."/>
            <person name="Duesterhoeft A."/>
            <person name="Fritzc C."/>
            <person name="Holzer E."/>
            <person name="Moestl D."/>
            <person name="Hilbert H."/>
            <person name="Borzym K."/>
            <person name="Langer I."/>
            <person name="Beck A."/>
            <person name="Lehrach H."/>
            <person name="Reinhardt R."/>
            <person name="Pohl T.M."/>
            <person name="Eger P."/>
            <person name="Zimmermann W."/>
            <person name="Wedler H."/>
            <person name="Wambutt R."/>
            <person name="Purnelle B."/>
            <person name="Goffeau A."/>
            <person name="Cadieu E."/>
            <person name="Dreano S."/>
            <person name="Gloux S."/>
            <person name="Lelaure V."/>
            <person name="Mottier S."/>
            <person name="Galibert F."/>
            <person name="Aves S.J."/>
            <person name="Xiang Z."/>
            <person name="Hunt C."/>
            <person name="Moore K."/>
            <person name="Hurst S.M."/>
            <person name="Lucas M."/>
            <person name="Rochet M."/>
            <person name="Gaillardin C."/>
            <person name="Tallada V.A."/>
            <person name="Garzon A."/>
            <person name="Thode G."/>
            <person name="Daga R.R."/>
            <person name="Cruzado L."/>
            <person name="Jimenez J."/>
            <person name="Sanchez M."/>
            <person name="del Rey F."/>
            <person name="Benito J."/>
            <person name="Dominguez A."/>
            <person name="Revuelta J.L."/>
            <person name="Moreno S."/>
            <person name="Armstrong J."/>
            <person name="Forsburg S.L."/>
            <person name="Cerutti L."/>
            <person name="Lowe T."/>
            <person name="McCombie W.R."/>
            <person name="Paulsen I."/>
            <person name="Potashkin J."/>
            <person name="Shpakovski G.V."/>
            <person name="Ussery D."/>
            <person name="Barrell B.G."/>
            <person name="Nurse P."/>
        </authorList>
    </citation>
    <scope>NUCLEOTIDE SEQUENCE [LARGE SCALE GENOMIC DNA]</scope>
    <source>
        <strain>972 / ATCC 24843</strain>
    </source>
</reference>
<reference key="2">
    <citation type="journal article" date="2011" name="Science">
        <title>Comparative functional genomics of the fission yeasts.</title>
        <authorList>
            <person name="Rhind N."/>
            <person name="Chen Z."/>
            <person name="Yassour M."/>
            <person name="Thompson D.A."/>
            <person name="Haas B.J."/>
            <person name="Habib N."/>
            <person name="Wapinski I."/>
            <person name="Roy S."/>
            <person name="Lin M.F."/>
            <person name="Heiman D.I."/>
            <person name="Young S.K."/>
            <person name="Furuya K."/>
            <person name="Guo Y."/>
            <person name="Pidoux A."/>
            <person name="Chen H.M."/>
            <person name="Robbertse B."/>
            <person name="Goldberg J.M."/>
            <person name="Aoki K."/>
            <person name="Bayne E.H."/>
            <person name="Berlin A.M."/>
            <person name="Desjardins C.A."/>
            <person name="Dobbs E."/>
            <person name="Dukaj L."/>
            <person name="Fan L."/>
            <person name="FitzGerald M.G."/>
            <person name="French C."/>
            <person name="Gujja S."/>
            <person name="Hansen K."/>
            <person name="Keifenheim D."/>
            <person name="Levin J.Z."/>
            <person name="Mosher R.A."/>
            <person name="Mueller C.A."/>
            <person name="Pfiffner J."/>
            <person name="Priest M."/>
            <person name="Russ C."/>
            <person name="Smialowska A."/>
            <person name="Swoboda P."/>
            <person name="Sykes S.M."/>
            <person name="Vaughn M."/>
            <person name="Vengrova S."/>
            <person name="Yoder R."/>
            <person name="Zeng Q."/>
            <person name="Allshire R."/>
            <person name="Baulcombe D."/>
            <person name="Birren B.W."/>
            <person name="Brown W."/>
            <person name="Ekwall K."/>
            <person name="Kellis M."/>
            <person name="Leatherwood J."/>
            <person name="Levin H."/>
            <person name="Margalit H."/>
            <person name="Martienssen R."/>
            <person name="Nieduszynski C.A."/>
            <person name="Spatafora J.W."/>
            <person name="Friedman N."/>
            <person name="Dalgaard J.Z."/>
            <person name="Baumann P."/>
            <person name="Niki H."/>
            <person name="Regev A."/>
            <person name="Nusbaum C."/>
        </authorList>
    </citation>
    <scope>REVISION OF GENE MODEL</scope>
</reference>
<reference key="3">
    <citation type="journal article" date="2007" name="Cell">
        <title>RNAi-dependent and -independent RNA turnover mechanisms contribute to heterochromatic gene silencing.</title>
        <authorList>
            <person name="Buehler M."/>
            <person name="Haas W."/>
            <person name="Gygi S.P."/>
            <person name="Moazed D."/>
        </authorList>
    </citation>
    <scope>FUNCTION</scope>
    <scope>SUBUNIT</scope>
    <scope>INTERACTION WITH CID14</scope>
</reference>
<reference key="4">
    <citation type="journal article" date="2010" name="RNA">
        <title>Proteomic and functional analysis of the noncanonical poly(A) polymerase Cid14.</title>
        <authorList>
            <person name="Keller C."/>
            <person name="Woolcock K."/>
            <person name="Hess D."/>
            <person name="Buehler M."/>
        </authorList>
    </citation>
    <scope>IDENTIFICATION IN THE TRAMP COMPLEX</scope>
    <scope>IDENTIFICATION BY MASS SPECTROMETRY</scope>
</reference>
<reference key="5">
    <citation type="journal article" date="2008" name="J. Proteome Res.">
        <title>Phosphoproteome analysis of fission yeast.</title>
        <authorList>
            <person name="Wilson-Grady J.T."/>
            <person name="Villen J."/>
            <person name="Gygi S.P."/>
        </authorList>
    </citation>
    <scope>PHOSPHORYLATION [LARGE SCALE ANALYSIS] AT SER-12 AND SER-16</scope>
    <scope>IDENTIFICATION BY MASS SPECTROMETRY</scope>
</reference>
<keyword id="KW-0479">Metal-binding</keyword>
<keyword id="KW-0539">Nucleus</keyword>
<keyword id="KW-0597">Phosphoprotein</keyword>
<keyword id="KW-1185">Reference proteome</keyword>
<keyword id="KW-0677">Repeat</keyword>
<keyword id="KW-0862">Zinc</keyword>
<keyword id="KW-0863">Zinc-finger</keyword>
<evidence type="ECO:0000250" key="1"/>
<evidence type="ECO:0000255" key="2">
    <source>
        <dbReference type="PROSITE-ProRule" id="PRU00047"/>
    </source>
</evidence>
<evidence type="ECO:0000256" key="3">
    <source>
        <dbReference type="SAM" id="MobiDB-lite"/>
    </source>
</evidence>
<evidence type="ECO:0000269" key="4">
    <source>
    </source>
</evidence>
<evidence type="ECO:0000269" key="5">
    <source>
    </source>
</evidence>
<evidence type="ECO:0000269" key="6">
    <source>
    </source>
</evidence>
<evidence type="ECO:0000305" key="7"/>